<organism>
    <name type="scientific">Pyrococcus furiosus (strain ATCC 43587 / DSM 3638 / JCM 8422 / Vc1)</name>
    <dbReference type="NCBI Taxonomy" id="186497"/>
    <lineage>
        <taxon>Archaea</taxon>
        <taxon>Methanobacteriati</taxon>
        <taxon>Methanobacteriota</taxon>
        <taxon>Thermococci</taxon>
        <taxon>Thermococcales</taxon>
        <taxon>Thermococcaceae</taxon>
        <taxon>Pyrococcus</taxon>
    </lineage>
</organism>
<proteinExistence type="evidence at protein level"/>
<accession>Q51802</accession>
<protein>
    <recommendedName>
        <fullName>Ketoisovalerate oxidoreductase subunit VorB</fullName>
        <shortName>VOR</shortName>
        <ecNumber>1.2.7.7</ecNumber>
    </recommendedName>
    <alternativeName>
        <fullName>2-oxoisovalerate ferredoxin reductase subunit beta</fullName>
    </alternativeName>
    <alternativeName>
        <fullName>2-oxoisovalerate oxidoreductase beta chain</fullName>
    </alternativeName>
</protein>
<comment type="catalytic activity">
    <reaction>
        <text>3-methyl-2-oxobutanoate + 2 oxidized [2Fe-2S]-[ferredoxin] + CoA = 2-methylpropanoyl-CoA + 2 reduced [2Fe-2S]-[ferredoxin] + CO2 + H(+)</text>
        <dbReference type="Rhea" id="RHEA:11712"/>
        <dbReference type="Rhea" id="RHEA-COMP:10000"/>
        <dbReference type="Rhea" id="RHEA-COMP:10001"/>
        <dbReference type="ChEBI" id="CHEBI:11851"/>
        <dbReference type="ChEBI" id="CHEBI:15378"/>
        <dbReference type="ChEBI" id="CHEBI:16526"/>
        <dbReference type="ChEBI" id="CHEBI:33737"/>
        <dbReference type="ChEBI" id="CHEBI:33738"/>
        <dbReference type="ChEBI" id="CHEBI:57287"/>
        <dbReference type="ChEBI" id="CHEBI:57338"/>
        <dbReference type="EC" id="1.2.7.7"/>
    </reaction>
</comment>
<comment type="subunit">
    <text>Heterotetramer of one alpha, one beta, one delta and one gamma chain.</text>
</comment>
<dbReference type="EC" id="1.2.7.7"/>
<dbReference type="EMBL" id="X85250">
    <property type="protein sequence ID" value="CAA59503.1"/>
    <property type="molecule type" value="Genomic_DNA"/>
</dbReference>
<dbReference type="EMBL" id="AE009950">
    <property type="protein sequence ID" value="AAL81092.1"/>
    <property type="molecule type" value="Genomic_DNA"/>
</dbReference>
<dbReference type="PIR" id="T45086">
    <property type="entry name" value="T45086"/>
</dbReference>
<dbReference type="RefSeq" id="WP_011012105.1">
    <property type="nucleotide sequence ID" value="NZ_CP023154.1"/>
</dbReference>
<dbReference type="SMR" id="Q51802"/>
<dbReference type="STRING" id="186497.PF0968"/>
<dbReference type="PaxDb" id="186497-PF0968"/>
<dbReference type="KEGG" id="pfu:PF0968"/>
<dbReference type="PATRIC" id="fig|186497.12.peg.1027"/>
<dbReference type="eggNOG" id="arCOG01601">
    <property type="taxonomic scope" value="Archaea"/>
</dbReference>
<dbReference type="HOGENOM" id="CLU_058423_0_0_2"/>
<dbReference type="OrthoDB" id="296931at2157"/>
<dbReference type="PhylomeDB" id="Q51802"/>
<dbReference type="Proteomes" id="UP000001013">
    <property type="component" value="Chromosome"/>
</dbReference>
<dbReference type="GO" id="GO:0043807">
    <property type="term" value="F:3-methyl-2-oxobutanoate dehydrogenase (ferredoxin) activity"/>
    <property type="evidence" value="ECO:0007669"/>
    <property type="project" value="UniProtKB-EC"/>
</dbReference>
<dbReference type="GO" id="GO:0030976">
    <property type="term" value="F:thiamine pyrophosphate binding"/>
    <property type="evidence" value="ECO:0007669"/>
    <property type="project" value="InterPro"/>
</dbReference>
<dbReference type="GO" id="GO:0006082">
    <property type="term" value="P:organic acid metabolic process"/>
    <property type="evidence" value="ECO:0007669"/>
    <property type="project" value="UniProtKB-ARBA"/>
</dbReference>
<dbReference type="GO" id="GO:0044272">
    <property type="term" value="P:sulfur compound biosynthetic process"/>
    <property type="evidence" value="ECO:0007669"/>
    <property type="project" value="UniProtKB-ARBA"/>
</dbReference>
<dbReference type="CDD" id="cd03376">
    <property type="entry name" value="TPP_PFOR_porB_like"/>
    <property type="match status" value="1"/>
</dbReference>
<dbReference type="Gene3D" id="3.40.50.970">
    <property type="match status" value="2"/>
</dbReference>
<dbReference type="InterPro" id="IPR051479">
    <property type="entry name" value="PorB-like"/>
</dbReference>
<dbReference type="InterPro" id="IPR029061">
    <property type="entry name" value="THDP-binding"/>
</dbReference>
<dbReference type="InterPro" id="IPR011766">
    <property type="entry name" value="TPP_enzyme_TPP-bd"/>
</dbReference>
<dbReference type="NCBIfam" id="NF008818">
    <property type="entry name" value="PRK11864.1"/>
    <property type="match status" value="1"/>
</dbReference>
<dbReference type="PANTHER" id="PTHR42897">
    <property type="entry name" value="PYRUVATE SYNTHASE SUBUNIT PORB"/>
    <property type="match status" value="1"/>
</dbReference>
<dbReference type="PANTHER" id="PTHR42897:SF2">
    <property type="entry name" value="PYRUVATE SYNTHASE SUBUNIT PORB"/>
    <property type="match status" value="1"/>
</dbReference>
<dbReference type="Pfam" id="PF02775">
    <property type="entry name" value="TPP_enzyme_C"/>
    <property type="match status" value="1"/>
</dbReference>
<dbReference type="SUPFAM" id="SSF52518">
    <property type="entry name" value="Thiamin diphosphate-binding fold (THDP-binding)"/>
    <property type="match status" value="1"/>
</dbReference>
<name>VORB_PYRFU</name>
<sequence>MEVPENIKKRVTIPFEEHFYAGHTACQGCGASLGLRYVLKAYGKKTILVIPACCSTIIAGPWPYSAIDANLFHTAFETTGAVISGIEAALKAMGYKVKGEDGIMVVGWAGDGGTADIGLQALSGFLERGHDAVYIMYDNEAYMNTGIQRSSSTPYGAWTTNTPGGRRHFLEKRHKKKVIDIVIAHRIPYAATASIAYPEDFIRKLKKAQKISGPSFIQLFAPCPTGWRAPTDKSIEIARLAVQTAYFPLFEYENGKYKINMPNPKKEPKPIEEFLKLQGRFKYMTKEDIETLQKWVLEEWERLKKLAEVFG</sequence>
<feature type="chain" id="PRO_0000099957" description="Ketoisovalerate oxidoreductase subunit VorB">
    <location>
        <begin position="1"/>
        <end position="311"/>
    </location>
</feature>
<keyword id="KW-0903">Direct protein sequencing</keyword>
<keyword id="KW-0560">Oxidoreductase</keyword>
<keyword id="KW-1185">Reference proteome</keyword>
<gene>
    <name type="primary">vorB</name>
    <name type="ordered locus">PF0968</name>
</gene>
<reference key="1">
    <citation type="journal article" date="1996" name="J. Bacteriol.">
        <title>Molecular and phylogenetic characterization of pyruvate and 2-ketoisovalerate ferredoxin oxidoreductases from Pyrococcus furiosus and pyruvate ferredoxin oxidoreductase from Thermotoga maritima.</title>
        <authorList>
            <person name="Kletzin A."/>
            <person name="Adams M.W.W."/>
        </authorList>
    </citation>
    <scope>NUCLEOTIDE SEQUENCE [GENOMIC DNA]</scope>
    <scope>PROTEIN SEQUENCE OF 1-7</scope>
    <source>
        <strain>ATCC 43587 / DSM 3638 / JCM 8422 / Vc1</strain>
    </source>
</reference>
<reference key="2">
    <citation type="journal article" date="1999" name="Genetics">
        <title>Divergence of the hyperthermophilic archaea Pyrococcus furiosus and P. horikoshii inferred from complete genomic sequences.</title>
        <authorList>
            <person name="Maeder D.L."/>
            <person name="Weiss R.B."/>
            <person name="Dunn D.M."/>
            <person name="Cherry J.L."/>
            <person name="Gonzalez J.M."/>
            <person name="DiRuggiero J."/>
            <person name="Robb F.T."/>
        </authorList>
    </citation>
    <scope>NUCLEOTIDE SEQUENCE [LARGE SCALE GENOMIC DNA]</scope>
    <source>
        <strain>ATCC 43587 / DSM 3638 / JCM 8422 / Vc1</strain>
    </source>
</reference>